<name>RPOZ_BIFLS</name>
<protein>
    <recommendedName>
        <fullName evidence="1">DNA-directed RNA polymerase subunit omega</fullName>
        <shortName evidence="1">RNAP omega subunit</shortName>
        <ecNumber evidence="1">2.7.7.6</ecNumber>
    </recommendedName>
    <alternativeName>
        <fullName evidence="1">RNA polymerase omega subunit</fullName>
    </alternativeName>
    <alternativeName>
        <fullName evidence="1">Transcriptase subunit omega</fullName>
    </alternativeName>
</protein>
<dbReference type="EC" id="2.7.7.6" evidence="1"/>
<dbReference type="EMBL" id="CP001095">
    <property type="protein sequence ID" value="ACJ53196.1"/>
    <property type="molecule type" value="Genomic_DNA"/>
</dbReference>
<dbReference type="EMBL" id="AP010889">
    <property type="protein sequence ID" value="BAJ69789.1"/>
    <property type="molecule type" value="Genomic_DNA"/>
</dbReference>
<dbReference type="RefSeq" id="WP_012578400.1">
    <property type="nucleotide sequence ID" value="NZ_JDTT01000015.1"/>
</dbReference>
<dbReference type="SMR" id="B7GUQ0"/>
<dbReference type="KEGG" id="bln:Blon_2135"/>
<dbReference type="KEGG" id="blon:BLIJ_2212"/>
<dbReference type="PATRIC" id="fig|391904.8.peg.2214"/>
<dbReference type="HOGENOM" id="CLU_125406_1_1_11"/>
<dbReference type="Proteomes" id="UP000001360">
    <property type="component" value="Chromosome"/>
</dbReference>
<dbReference type="GO" id="GO:0000428">
    <property type="term" value="C:DNA-directed RNA polymerase complex"/>
    <property type="evidence" value="ECO:0007669"/>
    <property type="project" value="UniProtKB-KW"/>
</dbReference>
<dbReference type="GO" id="GO:0003677">
    <property type="term" value="F:DNA binding"/>
    <property type="evidence" value="ECO:0007669"/>
    <property type="project" value="UniProtKB-UniRule"/>
</dbReference>
<dbReference type="GO" id="GO:0003899">
    <property type="term" value="F:DNA-directed RNA polymerase activity"/>
    <property type="evidence" value="ECO:0007669"/>
    <property type="project" value="UniProtKB-UniRule"/>
</dbReference>
<dbReference type="GO" id="GO:0006351">
    <property type="term" value="P:DNA-templated transcription"/>
    <property type="evidence" value="ECO:0007669"/>
    <property type="project" value="UniProtKB-UniRule"/>
</dbReference>
<dbReference type="Gene3D" id="3.90.940.10">
    <property type="match status" value="1"/>
</dbReference>
<dbReference type="HAMAP" id="MF_00366">
    <property type="entry name" value="RNApol_bact_RpoZ"/>
    <property type="match status" value="1"/>
</dbReference>
<dbReference type="InterPro" id="IPR003716">
    <property type="entry name" value="DNA-dir_RNA_pol_omega"/>
</dbReference>
<dbReference type="InterPro" id="IPR006110">
    <property type="entry name" value="Pol_omega/Rpo6/RPB6"/>
</dbReference>
<dbReference type="InterPro" id="IPR036161">
    <property type="entry name" value="RPB6/omega-like_sf"/>
</dbReference>
<dbReference type="NCBIfam" id="TIGR00690">
    <property type="entry name" value="rpoZ"/>
    <property type="match status" value="1"/>
</dbReference>
<dbReference type="PANTHER" id="PTHR34476">
    <property type="entry name" value="DNA-DIRECTED RNA POLYMERASE SUBUNIT OMEGA"/>
    <property type="match status" value="1"/>
</dbReference>
<dbReference type="PANTHER" id="PTHR34476:SF1">
    <property type="entry name" value="DNA-DIRECTED RNA POLYMERASE SUBUNIT OMEGA"/>
    <property type="match status" value="1"/>
</dbReference>
<dbReference type="Pfam" id="PF01192">
    <property type="entry name" value="RNA_pol_Rpb6"/>
    <property type="match status" value="1"/>
</dbReference>
<dbReference type="SMART" id="SM01409">
    <property type="entry name" value="RNA_pol_Rpb6"/>
    <property type="match status" value="1"/>
</dbReference>
<dbReference type="SUPFAM" id="SSF63562">
    <property type="entry name" value="RPB6/omega subunit-like"/>
    <property type="match status" value="1"/>
</dbReference>
<comment type="function">
    <text evidence="1">Promotes RNA polymerase assembly. Latches the N- and C-terminal regions of the beta' subunit thereby facilitating its interaction with the beta and alpha subunits.</text>
</comment>
<comment type="catalytic activity">
    <reaction evidence="1">
        <text>RNA(n) + a ribonucleoside 5'-triphosphate = RNA(n+1) + diphosphate</text>
        <dbReference type="Rhea" id="RHEA:21248"/>
        <dbReference type="Rhea" id="RHEA-COMP:14527"/>
        <dbReference type="Rhea" id="RHEA-COMP:17342"/>
        <dbReference type="ChEBI" id="CHEBI:33019"/>
        <dbReference type="ChEBI" id="CHEBI:61557"/>
        <dbReference type="ChEBI" id="CHEBI:140395"/>
        <dbReference type="EC" id="2.7.7.6"/>
    </reaction>
</comment>
<comment type="subunit">
    <text evidence="1">The RNAP catalytic core consists of 2 alpha, 1 beta, 1 beta' and 1 omega subunit. When a sigma factor is associated with the core the holoenzyme is formed, which can initiate transcription.</text>
</comment>
<comment type="similarity">
    <text evidence="1">Belongs to the RNA polymerase subunit omega family.</text>
</comment>
<accession>B7GUQ0</accession>
<accession>E8MMY6</accession>
<sequence length="94" mass="10352">MAFGTDPTPDGLANPPIDDLMKHADSKYALAIFAAKRARQINSYFTQLNEGLLQNVGPLVEYQNNEKPLSIAFREIDEGLLEETLGEDDANEGN</sequence>
<feature type="chain" id="PRO_1000194781" description="DNA-directed RNA polymerase subunit omega">
    <location>
        <begin position="1"/>
        <end position="94"/>
    </location>
</feature>
<gene>
    <name evidence="1" type="primary">rpoZ</name>
    <name type="ordered locus">Blon_2135</name>
    <name type="ordered locus">BLIJ_2212</name>
</gene>
<evidence type="ECO:0000255" key="1">
    <source>
        <dbReference type="HAMAP-Rule" id="MF_00366"/>
    </source>
</evidence>
<reference key="1">
    <citation type="journal article" date="2008" name="Proc. Natl. Acad. Sci. U.S.A.">
        <title>The genome sequence of Bifidobacterium longum subsp. infantis reveals adaptations for milk utilization within the infant microbiome.</title>
        <authorList>
            <person name="Sela D.A."/>
            <person name="Chapman J."/>
            <person name="Adeuya A."/>
            <person name="Kim J.H."/>
            <person name="Chen F."/>
            <person name="Whitehead T.R."/>
            <person name="Lapidus A."/>
            <person name="Rokhsar D.S."/>
            <person name="Lebrilla C.B."/>
            <person name="German J.B."/>
            <person name="Price N.P."/>
            <person name="Richardson P.M."/>
            <person name="Mills D.A."/>
        </authorList>
    </citation>
    <scope>NUCLEOTIDE SEQUENCE [LARGE SCALE GENOMIC DNA]</scope>
    <source>
        <strain>ATCC 15697 / DSM 20088 / JCM 1222 / NCTC 11817 / S12</strain>
    </source>
</reference>
<reference key="2">
    <citation type="journal article" date="2011" name="Nature">
        <title>Bifidobacteria can protect from enteropathogenic infection through production of acetate.</title>
        <authorList>
            <person name="Fukuda S."/>
            <person name="Toh H."/>
            <person name="Hase K."/>
            <person name="Oshima K."/>
            <person name="Nakanishi Y."/>
            <person name="Yoshimura K."/>
            <person name="Tobe T."/>
            <person name="Clarke J.M."/>
            <person name="Topping D.L."/>
            <person name="Suzuki T."/>
            <person name="Taylor T.D."/>
            <person name="Itoh K."/>
            <person name="Kikuchi J."/>
            <person name="Morita H."/>
            <person name="Hattori M."/>
            <person name="Ohno H."/>
        </authorList>
    </citation>
    <scope>NUCLEOTIDE SEQUENCE [LARGE SCALE GENOMIC DNA]</scope>
    <source>
        <strain>ATCC 15697 / DSM 20088 / JCM 1222 / NCTC 11817 / S12</strain>
    </source>
</reference>
<proteinExistence type="inferred from homology"/>
<keyword id="KW-0240">DNA-directed RNA polymerase</keyword>
<keyword id="KW-0548">Nucleotidyltransferase</keyword>
<keyword id="KW-0804">Transcription</keyword>
<keyword id="KW-0808">Transferase</keyword>
<organism>
    <name type="scientific">Bifidobacterium longum subsp. infantis (strain ATCC 15697 / DSM 20088 / JCM 1222 / NCTC 11817 / S12)</name>
    <dbReference type="NCBI Taxonomy" id="391904"/>
    <lineage>
        <taxon>Bacteria</taxon>
        <taxon>Bacillati</taxon>
        <taxon>Actinomycetota</taxon>
        <taxon>Actinomycetes</taxon>
        <taxon>Bifidobacteriales</taxon>
        <taxon>Bifidobacteriaceae</taxon>
        <taxon>Bifidobacterium</taxon>
    </lineage>
</organism>